<keyword id="KW-0030">Aminoacyl-tRNA synthetase</keyword>
<keyword id="KW-0067">ATP-binding</keyword>
<keyword id="KW-0963">Cytoplasm</keyword>
<keyword id="KW-0436">Ligase</keyword>
<keyword id="KW-0547">Nucleotide-binding</keyword>
<keyword id="KW-0648">Protein biosynthesis</keyword>
<sequence length="428" mass="48472">MLDIRLIRKEPKECEARLQKKDPSISLERLLDLDKNVRQLKADSESLLARRKALSGQIHKAKVANEDATPLIQGVNAIADQLVAFEKTLQEQEALLLDLMARLPNYPDEDVPVSPDKSGNKIIKSHGEIPTFTFPPKHHVQLNEKLQILDFKLPAKTSGSGWPAYKNEGVLLEWALLTYLLNKQQAHGFQLWLPPLLVKRDILFGSGQIPKFDGQYYRVEDGEQSLFLIPTAEVVLNGFHSQEILNEQDLPLYYAAFTPCFRREAGAGGSHERGLVRVHQFHKVEMFAFTTPEQEEIAYQKMIGIVEEILSELQLPYQLSLLSTGDMSFTAKKTIDAEVWLPGQQAFYEVSSISKCGDFQSRRSETRYRDAQGKLHFVNTLNGSGLATPRLLVAILENYQQEDGSVVIPHALRPYMNNQEILLPKTDR</sequence>
<dbReference type="EC" id="6.1.1.11" evidence="1"/>
<dbReference type="EMBL" id="AE002160">
    <property type="protein sequence ID" value="AAF38982.1"/>
    <property type="molecule type" value="Genomic_DNA"/>
</dbReference>
<dbReference type="PIR" id="C81742">
    <property type="entry name" value="C81742"/>
</dbReference>
<dbReference type="RefSeq" id="WP_010229376.1">
    <property type="nucleotide sequence ID" value="NZ_CP063055.1"/>
</dbReference>
<dbReference type="SMR" id="Q9PLJ7"/>
<dbReference type="GeneID" id="1245632"/>
<dbReference type="KEGG" id="cmu:TC_0102"/>
<dbReference type="eggNOG" id="COG0172">
    <property type="taxonomic scope" value="Bacteria"/>
</dbReference>
<dbReference type="HOGENOM" id="CLU_023797_1_1_0"/>
<dbReference type="OrthoDB" id="9804647at2"/>
<dbReference type="UniPathway" id="UPA00906">
    <property type="reaction ID" value="UER00895"/>
</dbReference>
<dbReference type="Proteomes" id="UP000000800">
    <property type="component" value="Chromosome"/>
</dbReference>
<dbReference type="GO" id="GO:0005737">
    <property type="term" value="C:cytoplasm"/>
    <property type="evidence" value="ECO:0007669"/>
    <property type="project" value="UniProtKB-SubCell"/>
</dbReference>
<dbReference type="GO" id="GO:0005524">
    <property type="term" value="F:ATP binding"/>
    <property type="evidence" value="ECO:0007669"/>
    <property type="project" value="UniProtKB-UniRule"/>
</dbReference>
<dbReference type="GO" id="GO:0004828">
    <property type="term" value="F:serine-tRNA ligase activity"/>
    <property type="evidence" value="ECO:0007669"/>
    <property type="project" value="UniProtKB-UniRule"/>
</dbReference>
<dbReference type="GO" id="GO:0016260">
    <property type="term" value="P:selenocysteine biosynthetic process"/>
    <property type="evidence" value="ECO:0007669"/>
    <property type="project" value="UniProtKB-UniRule"/>
</dbReference>
<dbReference type="GO" id="GO:0006434">
    <property type="term" value="P:seryl-tRNA aminoacylation"/>
    <property type="evidence" value="ECO:0007669"/>
    <property type="project" value="UniProtKB-UniRule"/>
</dbReference>
<dbReference type="CDD" id="cd00770">
    <property type="entry name" value="SerRS_core"/>
    <property type="match status" value="1"/>
</dbReference>
<dbReference type="Gene3D" id="3.30.930.10">
    <property type="entry name" value="Bira Bifunctional Protein, Domain 2"/>
    <property type="match status" value="1"/>
</dbReference>
<dbReference type="Gene3D" id="1.10.287.40">
    <property type="entry name" value="Serine-tRNA synthetase, tRNA binding domain"/>
    <property type="match status" value="1"/>
</dbReference>
<dbReference type="HAMAP" id="MF_00176">
    <property type="entry name" value="Ser_tRNA_synth_type1"/>
    <property type="match status" value="1"/>
</dbReference>
<dbReference type="InterPro" id="IPR002314">
    <property type="entry name" value="aa-tRNA-synt_IIb"/>
</dbReference>
<dbReference type="InterPro" id="IPR006195">
    <property type="entry name" value="aa-tRNA-synth_II"/>
</dbReference>
<dbReference type="InterPro" id="IPR045864">
    <property type="entry name" value="aa-tRNA-synth_II/BPL/LPL"/>
</dbReference>
<dbReference type="InterPro" id="IPR002317">
    <property type="entry name" value="Ser-tRNA-ligase_type_1"/>
</dbReference>
<dbReference type="InterPro" id="IPR015866">
    <property type="entry name" value="Ser-tRNA-synth_1_N"/>
</dbReference>
<dbReference type="InterPro" id="IPR042103">
    <property type="entry name" value="SerRS_1_N_sf"/>
</dbReference>
<dbReference type="InterPro" id="IPR033729">
    <property type="entry name" value="SerRS_core"/>
</dbReference>
<dbReference type="InterPro" id="IPR010978">
    <property type="entry name" value="tRNA-bd_arm"/>
</dbReference>
<dbReference type="NCBIfam" id="TIGR00414">
    <property type="entry name" value="serS"/>
    <property type="match status" value="1"/>
</dbReference>
<dbReference type="PANTHER" id="PTHR43697:SF1">
    <property type="entry name" value="SERINE--TRNA LIGASE"/>
    <property type="match status" value="1"/>
</dbReference>
<dbReference type="PANTHER" id="PTHR43697">
    <property type="entry name" value="SERYL-TRNA SYNTHETASE"/>
    <property type="match status" value="1"/>
</dbReference>
<dbReference type="Pfam" id="PF02403">
    <property type="entry name" value="Seryl_tRNA_N"/>
    <property type="match status" value="1"/>
</dbReference>
<dbReference type="Pfam" id="PF00587">
    <property type="entry name" value="tRNA-synt_2b"/>
    <property type="match status" value="1"/>
</dbReference>
<dbReference type="PIRSF" id="PIRSF001529">
    <property type="entry name" value="Ser-tRNA-synth_IIa"/>
    <property type="match status" value="1"/>
</dbReference>
<dbReference type="PRINTS" id="PR00981">
    <property type="entry name" value="TRNASYNTHSER"/>
</dbReference>
<dbReference type="SUPFAM" id="SSF55681">
    <property type="entry name" value="Class II aaRS and biotin synthetases"/>
    <property type="match status" value="1"/>
</dbReference>
<dbReference type="SUPFAM" id="SSF46589">
    <property type="entry name" value="tRNA-binding arm"/>
    <property type="match status" value="1"/>
</dbReference>
<dbReference type="PROSITE" id="PS50862">
    <property type="entry name" value="AA_TRNA_LIGASE_II"/>
    <property type="match status" value="1"/>
</dbReference>
<protein>
    <recommendedName>
        <fullName evidence="1">Serine--tRNA ligase</fullName>
        <ecNumber evidence="1">6.1.1.11</ecNumber>
    </recommendedName>
    <alternativeName>
        <fullName evidence="1">Seryl-tRNA synthetase</fullName>
        <shortName evidence="1">SerRS</shortName>
    </alternativeName>
    <alternativeName>
        <fullName evidence="1">Seryl-tRNA(Ser/Sec) synthetase</fullName>
    </alternativeName>
</protein>
<evidence type="ECO:0000255" key="1">
    <source>
        <dbReference type="HAMAP-Rule" id="MF_00176"/>
    </source>
</evidence>
<name>SYS_CHLMU</name>
<gene>
    <name evidence="1" type="primary">serS</name>
    <name type="ordered locus">TC_0102</name>
</gene>
<organism>
    <name type="scientific">Chlamydia muridarum (strain MoPn / Nigg)</name>
    <dbReference type="NCBI Taxonomy" id="243161"/>
    <lineage>
        <taxon>Bacteria</taxon>
        <taxon>Pseudomonadati</taxon>
        <taxon>Chlamydiota</taxon>
        <taxon>Chlamydiia</taxon>
        <taxon>Chlamydiales</taxon>
        <taxon>Chlamydiaceae</taxon>
        <taxon>Chlamydia/Chlamydophila group</taxon>
        <taxon>Chlamydia</taxon>
    </lineage>
</organism>
<reference key="1">
    <citation type="journal article" date="2000" name="Nucleic Acids Res.">
        <title>Genome sequences of Chlamydia trachomatis MoPn and Chlamydia pneumoniae AR39.</title>
        <authorList>
            <person name="Read T.D."/>
            <person name="Brunham R.C."/>
            <person name="Shen C."/>
            <person name="Gill S.R."/>
            <person name="Heidelberg J.F."/>
            <person name="White O."/>
            <person name="Hickey E.K."/>
            <person name="Peterson J.D."/>
            <person name="Utterback T.R."/>
            <person name="Berry K.J."/>
            <person name="Bass S."/>
            <person name="Linher K.D."/>
            <person name="Weidman J.F."/>
            <person name="Khouri H.M."/>
            <person name="Craven B."/>
            <person name="Bowman C."/>
            <person name="Dodson R.J."/>
            <person name="Gwinn M.L."/>
            <person name="Nelson W.C."/>
            <person name="DeBoy R.T."/>
            <person name="Kolonay J.F."/>
            <person name="McClarty G."/>
            <person name="Salzberg S.L."/>
            <person name="Eisen J.A."/>
            <person name="Fraser C.M."/>
        </authorList>
    </citation>
    <scope>NUCLEOTIDE SEQUENCE [LARGE SCALE GENOMIC DNA]</scope>
    <source>
        <strain>MoPn / Nigg</strain>
    </source>
</reference>
<feature type="chain" id="PRO_0000122029" description="Serine--tRNA ligase">
    <location>
        <begin position="1"/>
        <end position="428"/>
    </location>
</feature>
<feature type="binding site" evidence="1">
    <location>
        <begin position="231"/>
        <end position="233"/>
    </location>
    <ligand>
        <name>L-serine</name>
        <dbReference type="ChEBI" id="CHEBI:33384"/>
    </ligand>
</feature>
<feature type="binding site" evidence="1">
    <location>
        <begin position="262"/>
        <end position="264"/>
    </location>
    <ligand>
        <name>ATP</name>
        <dbReference type="ChEBI" id="CHEBI:30616"/>
    </ligand>
</feature>
<feature type="binding site" evidence="1">
    <location>
        <position position="278"/>
    </location>
    <ligand>
        <name>ATP</name>
        <dbReference type="ChEBI" id="CHEBI:30616"/>
    </ligand>
</feature>
<feature type="binding site" evidence="1">
    <location>
        <position position="285"/>
    </location>
    <ligand>
        <name>L-serine</name>
        <dbReference type="ChEBI" id="CHEBI:33384"/>
    </ligand>
</feature>
<feature type="binding site" evidence="1">
    <location>
        <begin position="349"/>
        <end position="352"/>
    </location>
    <ligand>
        <name>ATP</name>
        <dbReference type="ChEBI" id="CHEBI:30616"/>
    </ligand>
</feature>
<feature type="binding site" evidence="1">
    <location>
        <position position="384"/>
    </location>
    <ligand>
        <name>L-serine</name>
        <dbReference type="ChEBI" id="CHEBI:33384"/>
    </ligand>
</feature>
<proteinExistence type="inferred from homology"/>
<comment type="function">
    <text evidence="1">Catalyzes the attachment of serine to tRNA(Ser). Is also able to aminoacylate tRNA(Sec) with serine, to form the misacylated tRNA L-seryl-tRNA(Sec), which will be further converted into selenocysteinyl-tRNA(Sec).</text>
</comment>
<comment type="catalytic activity">
    <reaction evidence="1">
        <text>tRNA(Ser) + L-serine + ATP = L-seryl-tRNA(Ser) + AMP + diphosphate + H(+)</text>
        <dbReference type="Rhea" id="RHEA:12292"/>
        <dbReference type="Rhea" id="RHEA-COMP:9669"/>
        <dbReference type="Rhea" id="RHEA-COMP:9703"/>
        <dbReference type="ChEBI" id="CHEBI:15378"/>
        <dbReference type="ChEBI" id="CHEBI:30616"/>
        <dbReference type="ChEBI" id="CHEBI:33019"/>
        <dbReference type="ChEBI" id="CHEBI:33384"/>
        <dbReference type="ChEBI" id="CHEBI:78442"/>
        <dbReference type="ChEBI" id="CHEBI:78533"/>
        <dbReference type="ChEBI" id="CHEBI:456215"/>
        <dbReference type="EC" id="6.1.1.11"/>
    </reaction>
</comment>
<comment type="catalytic activity">
    <reaction evidence="1">
        <text>tRNA(Sec) + L-serine + ATP = L-seryl-tRNA(Sec) + AMP + diphosphate + H(+)</text>
        <dbReference type="Rhea" id="RHEA:42580"/>
        <dbReference type="Rhea" id="RHEA-COMP:9742"/>
        <dbReference type="Rhea" id="RHEA-COMP:10128"/>
        <dbReference type="ChEBI" id="CHEBI:15378"/>
        <dbReference type="ChEBI" id="CHEBI:30616"/>
        <dbReference type="ChEBI" id="CHEBI:33019"/>
        <dbReference type="ChEBI" id="CHEBI:33384"/>
        <dbReference type="ChEBI" id="CHEBI:78442"/>
        <dbReference type="ChEBI" id="CHEBI:78533"/>
        <dbReference type="ChEBI" id="CHEBI:456215"/>
        <dbReference type="EC" id="6.1.1.11"/>
    </reaction>
</comment>
<comment type="pathway">
    <text evidence="1">Aminoacyl-tRNA biosynthesis; selenocysteinyl-tRNA(Sec) biosynthesis; L-seryl-tRNA(Sec) from L-serine and tRNA(Sec): step 1/1.</text>
</comment>
<comment type="subunit">
    <text evidence="1">Homodimer. The tRNA molecule binds across the dimer.</text>
</comment>
<comment type="subcellular location">
    <subcellularLocation>
        <location evidence="1">Cytoplasm</location>
    </subcellularLocation>
</comment>
<comment type="domain">
    <text evidence="1">Consists of two distinct domains, a catalytic core and a N-terminal extension that is involved in tRNA binding.</text>
</comment>
<comment type="similarity">
    <text evidence="1">Belongs to the class-II aminoacyl-tRNA synthetase family. Type-1 seryl-tRNA synthetase subfamily.</text>
</comment>
<accession>Q9PLJ7</accession>